<organism>
    <name type="scientific">Escherichia coli O6:H1 (strain CFT073 / ATCC 700928 / UPEC)</name>
    <dbReference type="NCBI Taxonomy" id="199310"/>
    <lineage>
        <taxon>Bacteria</taxon>
        <taxon>Pseudomonadati</taxon>
        <taxon>Pseudomonadota</taxon>
        <taxon>Gammaproteobacteria</taxon>
        <taxon>Enterobacterales</taxon>
        <taxon>Enterobacteriaceae</taxon>
        <taxon>Escherichia</taxon>
    </lineage>
</organism>
<evidence type="ECO:0000250" key="1"/>
<evidence type="ECO:0000255" key="2">
    <source>
        <dbReference type="HAMAP-Rule" id="MF_00268"/>
    </source>
</evidence>
<evidence type="ECO:0000256" key="3">
    <source>
        <dbReference type="SAM" id="MobiDB-lite"/>
    </source>
</evidence>
<comment type="function">
    <text evidence="2">Can catalyze the hydrolysis of ATP in the presence of single-stranded DNA, the ATP-dependent uptake of single-stranded DNA by duplex DNA, and the ATP-dependent hybridization of homologous single-stranded DNAs. It interacts with LexA causing its activation and leading to its autocatalytic cleavage.</text>
</comment>
<comment type="subcellular location">
    <subcellularLocation>
        <location evidence="2">Cytoplasm</location>
    </subcellularLocation>
</comment>
<comment type="similarity">
    <text evidence="2">Belongs to the RecA family.</text>
</comment>
<protein>
    <recommendedName>
        <fullName evidence="2">Protein RecA</fullName>
    </recommendedName>
    <alternativeName>
        <fullName evidence="2">Recombinase A</fullName>
    </alternativeName>
</protein>
<gene>
    <name evidence="2" type="primary">recA</name>
    <name type="ordered locus">c3253</name>
</gene>
<dbReference type="EMBL" id="AE014075">
    <property type="protein sequence ID" value="AAN81704.1"/>
    <property type="molecule type" value="Genomic_DNA"/>
</dbReference>
<dbReference type="RefSeq" id="WP_000963143.1">
    <property type="nucleotide sequence ID" value="NZ_CP051263.1"/>
</dbReference>
<dbReference type="SMR" id="P0A7G7"/>
<dbReference type="STRING" id="199310.c3253"/>
<dbReference type="GeneID" id="93779312"/>
<dbReference type="KEGG" id="ecc:c3253"/>
<dbReference type="eggNOG" id="COG0468">
    <property type="taxonomic scope" value="Bacteria"/>
</dbReference>
<dbReference type="HOGENOM" id="CLU_040469_3_2_6"/>
<dbReference type="BioCyc" id="ECOL199310:C3253-MONOMER"/>
<dbReference type="Proteomes" id="UP000001410">
    <property type="component" value="Chromosome"/>
</dbReference>
<dbReference type="GO" id="GO:0005829">
    <property type="term" value="C:cytosol"/>
    <property type="evidence" value="ECO:0007669"/>
    <property type="project" value="TreeGrafter"/>
</dbReference>
<dbReference type="GO" id="GO:0005524">
    <property type="term" value="F:ATP binding"/>
    <property type="evidence" value="ECO:0007669"/>
    <property type="project" value="UniProtKB-UniRule"/>
</dbReference>
<dbReference type="GO" id="GO:0016887">
    <property type="term" value="F:ATP hydrolysis activity"/>
    <property type="evidence" value="ECO:0007669"/>
    <property type="project" value="InterPro"/>
</dbReference>
<dbReference type="GO" id="GO:0140664">
    <property type="term" value="F:ATP-dependent DNA damage sensor activity"/>
    <property type="evidence" value="ECO:0007669"/>
    <property type="project" value="InterPro"/>
</dbReference>
<dbReference type="GO" id="GO:0003684">
    <property type="term" value="F:damaged DNA binding"/>
    <property type="evidence" value="ECO:0007669"/>
    <property type="project" value="UniProtKB-UniRule"/>
</dbReference>
<dbReference type="GO" id="GO:0003697">
    <property type="term" value="F:single-stranded DNA binding"/>
    <property type="evidence" value="ECO:0007669"/>
    <property type="project" value="UniProtKB-UniRule"/>
</dbReference>
<dbReference type="GO" id="GO:0006310">
    <property type="term" value="P:DNA recombination"/>
    <property type="evidence" value="ECO:0007669"/>
    <property type="project" value="UniProtKB-UniRule"/>
</dbReference>
<dbReference type="GO" id="GO:0006281">
    <property type="term" value="P:DNA repair"/>
    <property type="evidence" value="ECO:0007669"/>
    <property type="project" value="UniProtKB-UniRule"/>
</dbReference>
<dbReference type="GO" id="GO:0009432">
    <property type="term" value="P:SOS response"/>
    <property type="evidence" value="ECO:0007669"/>
    <property type="project" value="UniProtKB-UniRule"/>
</dbReference>
<dbReference type="CDD" id="cd00983">
    <property type="entry name" value="RecA"/>
    <property type="match status" value="1"/>
</dbReference>
<dbReference type="FunFam" id="3.40.50.300:FF:000087">
    <property type="entry name" value="Recombinase RecA"/>
    <property type="match status" value="1"/>
</dbReference>
<dbReference type="Gene3D" id="3.40.50.300">
    <property type="entry name" value="P-loop containing nucleotide triphosphate hydrolases"/>
    <property type="match status" value="1"/>
</dbReference>
<dbReference type="HAMAP" id="MF_00268">
    <property type="entry name" value="RecA"/>
    <property type="match status" value="1"/>
</dbReference>
<dbReference type="InterPro" id="IPR003593">
    <property type="entry name" value="AAA+_ATPase"/>
</dbReference>
<dbReference type="InterPro" id="IPR013765">
    <property type="entry name" value="DNA_recomb/repair_RecA"/>
</dbReference>
<dbReference type="InterPro" id="IPR020584">
    <property type="entry name" value="DNA_recomb/repair_RecA_CS"/>
</dbReference>
<dbReference type="InterPro" id="IPR027417">
    <property type="entry name" value="P-loop_NTPase"/>
</dbReference>
<dbReference type="InterPro" id="IPR049261">
    <property type="entry name" value="RecA-like_C"/>
</dbReference>
<dbReference type="InterPro" id="IPR049428">
    <property type="entry name" value="RecA-like_N"/>
</dbReference>
<dbReference type="InterPro" id="IPR020588">
    <property type="entry name" value="RecA_ATP-bd"/>
</dbReference>
<dbReference type="InterPro" id="IPR023400">
    <property type="entry name" value="RecA_C_sf"/>
</dbReference>
<dbReference type="InterPro" id="IPR020587">
    <property type="entry name" value="RecA_monomer-monomer_interface"/>
</dbReference>
<dbReference type="NCBIfam" id="TIGR02012">
    <property type="entry name" value="tigrfam_recA"/>
    <property type="match status" value="1"/>
</dbReference>
<dbReference type="PANTHER" id="PTHR45900:SF1">
    <property type="entry name" value="MITOCHONDRIAL DNA REPAIR PROTEIN RECA HOMOLOG-RELATED"/>
    <property type="match status" value="1"/>
</dbReference>
<dbReference type="PANTHER" id="PTHR45900">
    <property type="entry name" value="RECA"/>
    <property type="match status" value="1"/>
</dbReference>
<dbReference type="Pfam" id="PF00154">
    <property type="entry name" value="RecA"/>
    <property type="match status" value="1"/>
</dbReference>
<dbReference type="Pfam" id="PF21096">
    <property type="entry name" value="RecA_C"/>
    <property type="match status" value="1"/>
</dbReference>
<dbReference type="PRINTS" id="PR00142">
    <property type="entry name" value="RECA"/>
</dbReference>
<dbReference type="SMART" id="SM00382">
    <property type="entry name" value="AAA"/>
    <property type="match status" value="1"/>
</dbReference>
<dbReference type="SUPFAM" id="SSF52540">
    <property type="entry name" value="P-loop containing nucleoside triphosphate hydrolases"/>
    <property type="match status" value="1"/>
</dbReference>
<dbReference type="SUPFAM" id="SSF54752">
    <property type="entry name" value="RecA protein, C-terminal domain"/>
    <property type="match status" value="1"/>
</dbReference>
<dbReference type="PROSITE" id="PS00321">
    <property type="entry name" value="RECA_1"/>
    <property type="match status" value="1"/>
</dbReference>
<dbReference type="PROSITE" id="PS50162">
    <property type="entry name" value="RECA_2"/>
    <property type="match status" value="1"/>
</dbReference>
<dbReference type="PROSITE" id="PS50163">
    <property type="entry name" value="RECA_3"/>
    <property type="match status" value="1"/>
</dbReference>
<sequence>MAIDENKQKALAAALGQIEKQFGKGSIMRLGEDRSMDVETISTGSLSLDIALGAGGLPMGRIVEIYGPESSGKTTLTLQVIAAAQREGKTCAFIDAEHALDPIYARKLGVDIDNLLCSQPDTGEQALEICDALARSGAVDVIVVDSVAALTPKAEIEGEIGDSHMGLAARMMSQAMRKLAGNLKQSNTLLIFINQIRMKIGVMFGNPETTTGGNALKFYASVRLDIRRIGAVKEGENVVGSETRVKVVKNKIAAPFKQAEFQILYGEGINFYGELVDLGVKEKLIEKAGAWYSYKGEKIGQGKANATAWLKDNPETAKEIEKKVRELLLSNPNSTPDFSVDDSEGVAETNEDF</sequence>
<feature type="initiator methionine" description="Removed" evidence="1">
    <location>
        <position position="1"/>
    </location>
</feature>
<feature type="chain" id="PRO_0000122705" description="Protein RecA">
    <location>
        <begin position="2"/>
        <end position="353"/>
    </location>
</feature>
<feature type="region of interest" description="Disordered" evidence="3">
    <location>
        <begin position="330"/>
        <end position="353"/>
    </location>
</feature>
<feature type="compositionally biased region" description="Acidic residues" evidence="3">
    <location>
        <begin position="339"/>
        <end position="353"/>
    </location>
</feature>
<feature type="binding site" evidence="2">
    <location>
        <begin position="67"/>
        <end position="74"/>
    </location>
    <ligand>
        <name>ATP</name>
        <dbReference type="ChEBI" id="CHEBI:30616"/>
    </ligand>
</feature>
<proteinExistence type="inferred from homology"/>
<keyword id="KW-0067">ATP-binding</keyword>
<keyword id="KW-0963">Cytoplasm</keyword>
<keyword id="KW-0227">DNA damage</keyword>
<keyword id="KW-0233">DNA recombination</keyword>
<keyword id="KW-0234">DNA repair</keyword>
<keyword id="KW-0238">DNA-binding</keyword>
<keyword id="KW-0547">Nucleotide-binding</keyword>
<keyword id="KW-1185">Reference proteome</keyword>
<keyword id="KW-0742">SOS response</keyword>
<name>RECA_ECOL6</name>
<accession>P0A7G7</accession>
<accession>P03017</accession>
<accession>P26347</accession>
<accession>P78213</accession>
<reference key="1">
    <citation type="journal article" date="2002" name="Proc. Natl. Acad. Sci. U.S.A.">
        <title>Extensive mosaic structure revealed by the complete genome sequence of uropathogenic Escherichia coli.</title>
        <authorList>
            <person name="Welch R.A."/>
            <person name="Burland V."/>
            <person name="Plunkett G. III"/>
            <person name="Redford P."/>
            <person name="Roesch P."/>
            <person name="Rasko D."/>
            <person name="Buckles E.L."/>
            <person name="Liou S.-R."/>
            <person name="Boutin A."/>
            <person name="Hackett J."/>
            <person name="Stroud D."/>
            <person name="Mayhew G.F."/>
            <person name="Rose D.J."/>
            <person name="Zhou S."/>
            <person name="Schwartz D.C."/>
            <person name="Perna N.T."/>
            <person name="Mobley H.L.T."/>
            <person name="Donnenberg M.S."/>
            <person name="Blattner F.R."/>
        </authorList>
    </citation>
    <scope>NUCLEOTIDE SEQUENCE [LARGE SCALE GENOMIC DNA]</scope>
    <source>
        <strain>CFT073 / ATCC 700928 / UPEC</strain>
    </source>
</reference>